<protein>
    <recommendedName>
        <fullName evidence="1">Aspartate--ammonia ligase</fullName>
        <ecNumber evidence="1">6.3.1.1</ecNumber>
    </recommendedName>
    <alternativeName>
        <fullName evidence="1">Asparagine synthetase A</fullName>
    </alternativeName>
</protein>
<gene>
    <name evidence="1" type="primary">asnA</name>
    <name type="ordered locus">SPA3716</name>
</gene>
<sequence>MKTAYIAKQRQISFVKSHFSRQLEERLGLIEVQAPILSRVGDGTQDNLSGCEKAVQVKVKALPDAQFEVVHSLAKWKRQTLGQHDFSAGEGLYTHMKALRPDEDRLSPLHSVYVDQWDWERVMGDGERQFSTLKSTVEAIWAGIKATEAEVHKQFGLAPFLPDQIHFVHSQELLARFPDLDAKGRERAIAKELGAVFLVGIGGKLSDGHRHDVRAPDYDDWSSASELGYAGLNGDILVWNPVLEDAFELSSMGIRVDADTLMRQLALTGDEDRLQLEWHQALLRGEMPQTIGGGIGQSRLTMLLLQLPHIGQVQCGVWPAQVRESIPAIL</sequence>
<dbReference type="EC" id="6.3.1.1" evidence="1"/>
<dbReference type="EMBL" id="CP000026">
    <property type="protein sequence ID" value="AAV79508.1"/>
    <property type="molecule type" value="Genomic_DNA"/>
</dbReference>
<dbReference type="RefSeq" id="WP_000845118.1">
    <property type="nucleotide sequence ID" value="NC_006511.1"/>
</dbReference>
<dbReference type="SMR" id="Q5PJY0"/>
<dbReference type="GeneID" id="66758166"/>
<dbReference type="KEGG" id="spt:SPA3716"/>
<dbReference type="HOGENOM" id="CLU_071543_0_0_6"/>
<dbReference type="UniPathway" id="UPA00134">
    <property type="reaction ID" value="UER00194"/>
</dbReference>
<dbReference type="Proteomes" id="UP000008185">
    <property type="component" value="Chromosome"/>
</dbReference>
<dbReference type="GO" id="GO:0005829">
    <property type="term" value="C:cytosol"/>
    <property type="evidence" value="ECO:0007669"/>
    <property type="project" value="TreeGrafter"/>
</dbReference>
<dbReference type="GO" id="GO:0004071">
    <property type="term" value="F:aspartate-ammonia ligase activity"/>
    <property type="evidence" value="ECO:0007669"/>
    <property type="project" value="UniProtKB-UniRule"/>
</dbReference>
<dbReference type="GO" id="GO:0005524">
    <property type="term" value="F:ATP binding"/>
    <property type="evidence" value="ECO:0007669"/>
    <property type="project" value="UniProtKB-UniRule"/>
</dbReference>
<dbReference type="GO" id="GO:0070981">
    <property type="term" value="P:L-asparagine biosynthetic process"/>
    <property type="evidence" value="ECO:0007669"/>
    <property type="project" value="UniProtKB-UniRule"/>
</dbReference>
<dbReference type="CDD" id="cd00645">
    <property type="entry name" value="AsnA"/>
    <property type="match status" value="1"/>
</dbReference>
<dbReference type="FunFam" id="3.30.930.10:FF:000025">
    <property type="entry name" value="Aspartate--ammonia ligase"/>
    <property type="match status" value="1"/>
</dbReference>
<dbReference type="Gene3D" id="3.30.930.10">
    <property type="entry name" value="Bira Bifunctional Protein, Domain 2"/>
    <property type="match status" value="1"/>
</dbReference>
<dbReference type="HAMAP" id="MF_00555">
    <property type="entry name" value="AsnA"/>
    <property type="match status" value="1"/>
</dbReference>
<dbReference type="InterPro" id="IPR006195">
    <property type="entry name" value="aa-tRNA-synth_II"/>
</dbReference>
<dbReference type="InterPro" id="IPR045864">
    <property type="entry name" value="aa-tRNA-synth_II/BPL/LPL"/>
</dbReference>
<dbReference type="InterPro" id="IPR004618">
    <property type="entry name" value="AsnA"/>
</dbReference>
<dbReference type="NCBIfam" id="TIGR00669">
    <property type="entry name" value="asnA"/>
    <property type="match status" value="1"/>
</dbReference>
<dbReference type="PANTHER" id="PTHR30073">
    <property type="entry name" value="ASPARTATE--AMMONIA LIGASE"/>
    <property type="match status" value="1"/>
</dbReference>
<dbReference type="PANTHER" id="PTHR30073:SF5">
    <property type="entry name" value="ASPARTATE--AMMONIA LIGASE"/>
    <property type="match status" value="1"/>
</dbReference>
<dbReference type="Pfam" id="PF03590">
    <property type="entry name" value="AsnA"/>
    <property type="match status" value="1"/>
</dbReference>
<dbReference type="PIRSF" id="PIRSF001555">
    <property type="entry name" value="Asp_ammon_ligase"/>
    <property type="match status" value="1"/>
</dbReference>
<dbReference type="SUPFAM" id="SSF55681">
    <property type="entry name" value="Class II aaRS and biotin synthetases"/>
    <property type="match status" value="1"/>
</dbReference>
<dbReference type="PROSITE" id="PS50862">
    <property type="entry name" value="AA_TRNA_LIGASE_II"/>
    <property type="match status" value="1"/>
</dbReference>
<evidence type="ECO:0000255" key="1">
    <source>
        <dbReference type="HAMAP-Rule" id="MF_00555"/>
    </source>
</evidence>
<feature type="chain" id="PRO_1000017958" description="Aspartate--ammonia ligase">
    <location>
        <begin position="1"/>
        <end position="330"/>
    </location>
</feature>
<name>ASNA_SALPA</name>
<reference key="1">
    <citation type="journal article" date="2004" name="Nat. Genet.">
        <title>Comparison of genome degradation in Paratyphi A and Typhi, human-restricted serovars of Salmonella enterica that cause typhoid.</title>
        <authorList>
            <person name="McClelland M."/>
            <person name="Sanderson K.E."/>
            <person name="Clifton S.W."/>
            <person name="Latreille P."/>
            <person name="Porwollik S."/>
            <person name="Sabo A."/>
            <person name="Meyer R."/>
            <person name="Bieri T."/>
            <person name="Ozersky P."/>
            <person name="McLellan M."/>
            <person name="Harkins C.R."/>
            <person name="Wang C."/>
            <person name="Nguyen C."/>
            <person name="Berghoff A."/>
            <person name="Elliott G."/>
            <person name="Kohlberg S."/>
            <person name="Strong C."/>
            <person name="Du F."/>
            <person name="Carter J."/>
            <person name="Kremizki C."/>
            <person name="Layman D."/>
            <person name="Leonard S."/>
            <person name="Sun H."/>
            <person name="Fulton L."/>
            <person name="Nash W."/>
            <person name="Miner T."/>
            <person name="Minx P."/>
            <person name="Delehaunty K."/>
            <person name="Fronick C."/>
            <person name="Magrini V."/>
            <person name="Nhan M."/>
            <person name="Warren W."/>
            <person name="Florea L."/>
            <person name="Spieth J."/>
            <person name="Wilson R.K."/>
        </authorList>
    </citation>
    <scope>NUCLEOTIDE SEQUENCE [LARGE SCALE GENOMIC DNA]</scope>
    <source>
        <strain>ATCC 9150 / SARB42</strain>
    </source>
</reference>
<keyword id="KW-0028">Amino-acid biosynthesis</keyword>
<keyword id="KW-0061">Asparagine biosynthesis</keyword>
<keyword id="KW-0067">ATP-binding</keyword>
<keyword id="KW-0963">Cytoplasm</keyword>
<keyword id="KW-0436">Ligase</keyword>
<keyword id="KW-0547">Nucleotide-binding</keyword>
<proteinExistence type="inferred from homology"/>
<organism>
    <name type="scientific">Salmonella paratyphi A (strain ATCC 9150 / SARB42)</name>
    <dbReference type="NCBI Taxonomy" id="295319"/>
    <lineage>
        <taxon>Bacteria</taxon>
        <taxon>Pseudomonadati</taxon>
        <taxon>Pseudomonadota</taxon>
        <taxon>Gammaproteobacteria</taxon>
        <taxon>Enterobacterales</taxon>
        <taxon>Enterobacteriaceae</taxon>
        <taxon>Salmonella</taxon>
    </lineage>
</organism>
<accession>Q5PJY0</accession>
<comment type="catalytic activity">
    <reaction evidence="1">
        <text>L-aspartate + NH4(+) + ATP = L-asparagine + AMP + diphosphate + H(+)</text>
        <dbReference type="Rhea" id="RHEA:11372"/>
        <dbReference type="ChEBI" id="CHEBI:15378"/>
        <dbReference type="ChEBI" id="CHEBI:28938"/>
        <dbReference type="ChEBI" id="CHEBI:29991"/>
        <dbReference type="ChEBI" id="CHEBI:30616"/>
        <dbReference type="ChEBI" id="CHEBI:33019"/>
        <dbReference type="ChEBI" id="CHEBI:58048"/>
        <dbReference type="ChEBI" id="CHEBI:456215"/>
        <dbReference type="EC" id="6.3.1.1"/>
    </reaction>
</comment>
<comment type="pathway">
    <text evidence="1">Amino-acid biosynthesis; L-asparagine biosynthesis; L-asparagine from L-aspartate (ammonia route): step 1/1.</text>
</comment>
<comment type="subcellular location">
    <subcellularLocation>
        <location evidence="1">Cytoplasm</location>
    </subcellularLocation>
</comment>
<comment type="similarity">
    <text evidence="1">Belongs to the class-II aminoacyl-tRNA synthetase family. AsnA subfamily.</text>
</comment>